<keyword id="KW-0067">ATP-binding</keyword>
<keyword id="KW-0436">Ligase</keyword>
<keyword id="KW-0460">Magnesium</keyword>
<keyword id="KW-0479">Metal-binding</keyword>
<keyword id="KW-0520">NAD</keyword>
<keyword id="KW-0547">Nucleotide-binding</keyword>
<evidence type="ECO:0000255" key="1">
    <source>
        <dbReference type="HAMAP-Rule" id="MF_00193"/>
    </source>
</evidence>
<name>NADE_STRP4</name>
<feature type="chain" id="PRO_1000099049" description="NH(3)-dependent NAD(+) synthetase">
    <location>
        <begin position="1"/>
        <end position="274"/>
    </location>
</feature>
<feature type="binding site" evidence="1">
    <location>
        <begin position="46"/>
        <end position="53"/>
    </location>
    <ligand>
        <name>ATP</name>
        <dbReference type="ChEBI" id="CHEBI:30616"/>
    </ligand>
</feature>
<feature type="binding site" evidence="1">
    <location>
        <position position="52"/>
    </location>
    <ligand>
        <name>Mg(2+)</name>
        <dbReference type="ChEBI" id="CHEBI:18420"/>
    </ligand>
</feature>
<feature type="binding site" evidence="1">
    <location>
        <position position="140"/>
    </location>
    <ligand>
        <name>deamido-NAD(+)</name>
        <dbReference type="ChEBI" id="CHEBI:58437"/>
    </ligand>
</feature>
<feature type="binding site" evidence="1">
    <location>
        <position position="160"/>
    </location>
    <ligand>
        <name>ATP</name>
        <dbReference type="ChEBI" id="CHEBI:30616"/>
    </ligand>
</feature>
<feature type="binding site" evidence="1">
    <location>
        <position position="165"/>
    </location>
    <ligand>
        <name>Mg(2+)</name>
        <dbReference type="ChEBI" id="CHEBI:18420"/>
    </ligand>
</feature>
<feature type="binding site" evidence="1">
    <location>
        <position position="173"/>
    </location>
    <ligand>
        <name>deamido-NAD(+)</name>
        <dbReference type="ChEBI" id="CHEBI:58437"/>
    </ligand>
</feature>
<feature type="binding site" evidence="1">
    <location>
        <position position="180"/>
    </location>
    <ligand>
        <name>deamido-NAD(+)</name>
        <dbReference type="ChEBI" id="CHEBI:58437"/>
    </ligand>
</feature>
<feature type="binding site" evidence="1">
    <location>
        <position position="189"/>
    </location>
    <ligand>
        <name>ATP</name>
        <dbReference type="ChEBI" id="CHEBI:30616"/>
    </ligand>
</feature>
<feature type="binding site" evidence="1">
    <location>
        <position position="211"/>
    </location>
    <ligand>
        <name>ATP</name>
        <dbReference type="ChEBI" id="CHEBI:30616"/>
    </ligand>
</feature>
<feature type="binding site" evidence="1">
    <location>
        <begin position="260"/>
        <end position="261"/>
    </location>
    <ligand>
        <name>deamido-NAD(+)</name>
        <dbReference type="ChEBI" id="CHEBI:58437"/>
    </ligand>
</feature>
<comment type="function">
    <text evidence="1">Catalyzes the ATP-dependent amidation of deamido-NAD to form NAD. Uses ammonia as a nitrogen source.</text>
</comment>
<comment type="catalytic activity">
    <reaction evidence="1">
        <text>deamido-NAD(+) + NH4(+) + ATP = AMP + diphosphate + NAD(+) + H(+)</text>
        <dbReference type="Rhea" id="RHEA:21188"/>
        <dbReference type="ChEBI" id="CHEBI:15378"/>
        <dbReference type="ChEBI" id="CHEBI:28938"/>
        <dbReference type="ChEBI" id="CHEBI:30616"/>
        <dbReference type="ChEBI" id="CHEBI:33019"/>
        <dbReference type="ChEBI" id="CHEBI:57540"/>
        <dbReference type="ChEBI" id="CHEBI:58437"/>
        <dbReference type="ChEBI" id="CHEBI:456215"/>
        <dbReference type="EC" id="6.3.1.5"/>
    </reaction>
</comment>
<comment type="pathway">
    <text evidence="1">Cofactor biosynthesis; NAD(+) biosynthesis; NAD(+) from deamido-NAD(+) (ammonia route): step 1/1.</text>
</comment>
<comment type="subunit">
    <text evidence="1">Homodimer.</text>
</comment>
<comment type="similarity">
    <text evidence="1">Belongs to the NAD synthetase family.</text>
</comment>
<dbReference type="EC" id="6.3.1.5" evidence="1"/>
<dbReference type="EMBL" id="CP001015">
    <property type="protein sequence ID" value="ACF56514.1"/>
    <property type="molecule type" value="Genomic_DNA"/>
</dbReference>
<dbReference type="SMR" id="B5E5S7"/>
<dbReference type="KEGG" id="spx:SPG_1360"/>
<dbReference type="HOGENOM" id="CLU_059327_3_0_9"/>
<dbReference type="UniPathway" id="UPA00253">
    <property type="reaction ID" value="UER00333"/>
</dbReference>
<dbReference type="GO" id="GO:0005737">
    <property type="term" value="C:cytoplasm"/>
    <property type="evidence" value="ECO:0007669"/>
    <property type="project" value="InterPro"/>
</dbReference>
<dbReference type="GO" id="GO:0005524">
    <property type="term" value="F:ATP binding"/>
    <property type="evidence" value="ECO:0007669"/>
    <property type="project" value="UniProtKB-UniRule"/>
</dbReference>
<dbReference type="GO" id="GO:0004359">
    <property type="term" value="F:glutaminase activity"/>
    <property type="evidence" value="ECO:0007669"/>
    <property type="project" value="InterPro"/>
</dbReference>
<dbReference type="GO" id="GO:0046872">
    <property type="term" value="F:metal ion binding"/>
    <property type="evidence" value="ECO:0007669"/>
    <property type="project" value="UniProtKB-KW"/>
</dbReference>
<dbReference type="GO" id="GO:0003952">
    <property type="term" value="F:NAD+ synthase (glutamine-hydrolyzing) activity"/>
    <property type="evidence" value="ECO:0007669"/>
    <property type="project" value="InterPro"/>
</dbReference>
<dbReference type="GO" id="GO:0008795">
    <property type="term" value="F:NAD+ synthase activity"/>
    <property type="evidence" value="ECO:0007669"/>
    <property type="project" value="UniProtKB-UniRule"/>
</dbReference>
<dbReference type="GO" id="GO:0009435">
    <property type="term" value="P:NAD biosynthetic process"/>
    <property type="evidence" value="ECO:0007669"/>
    <property type="project" value="UniProtKB-UniRule"/>
</dbReference>
<dbReference type="CDD" id="cd00553">
    <property type="entry name" value="NAD_synthase"/>
    <property type="match status" value="1"/>
</dbReference>
<dbReference type="FunFam" id="3.40.50.620:FF:000015">
    <property type="entry name" value="NH(3)-dependent NAD(+) synthetase"/>
    <property type="match status" value="1"/>
</dbReference>
<dbReference type="Gene3D" id="3.40.50.620">
    <property type="entry name" value="HUPs"/>
    <property type="match status" value="1"/>
</dbReference>
<dbReference type="HAMAP" id="MF_00193">
    <property type="entry name" value="NadE_ammonia_dep"/>
    <property type="match status" value="1"/>
</dbReference>
<dbReference type="InterPro" id="IPR022310">
    <property type="entry name" value="NAD/GMP_synthase"/>
</dbReference>
<dbReference type="InterPro" id="IPR003694">
    <property type="entry name" value="NAD_synthase"/>
</dbReference>
<dbReference type="InterPro" id="IPR022926">
    <property type="entry name" value="NH(3)-dep_NAD(+)_synth"/>
</dbReference>
<dbReference type="InterPro" id="IPR014729">
    <property type="entry name" value="Rossmann-like_a/b/a_fold"/>
</dbReference>
<dbReference type="NCBIfam" id="TIGR00552">
    <property type="entry name" value="nadE"/>
    <property type="match status" value="1"/>
</dbReference>
<dbReference type="NCBIfam" id="NF001979">
    <property type="entry name" value="PRK00768.1"/>
    <property type="match status" value="1"/>
</dbReference>
<dbReference type="PANTHER" id="PTHR23090">
    <property type="entry name" value="NH 3 /GLUTAMINE-DEPENDENT NAD + SYNTHETASE"/>
    <property type="match status" value="1"/>
</dbReference>
<dbReference type="PANTHER" id="PTHR23090:SF7">
    <property type="entry name" value="NH(3)-DEPENDENT NAD(+) SYNTHETASE"/>
    <property type="match status" value="1"/>
</dbReference>
<dbReference type="Pfam" id="PF02540">
    <property type="entry name" value="NAD_synthase"/>
    <property type="match status" value="1"/>
</dbReference>
<dbReference type="SUPFAM" id="SSF52402">
    <property type="entry name" value="Adenine nucleotide alpha hydrolases-like"/>
    <property type="match status" value="1"/>
</dbReference>
<sequence length="274" mass="30195">MSLQETIIQELGVKPVIDAQEEIRRSIDFLKRYLKKHPFLKTFVLGISGGQDSTLAGRLAQLAMEELRAETGDDSYKFIAVRLPYGVQADEADAQKALAFIQPDVSLVVNIKESADAMTAAVEATGSPVSDFNKGNIKARCRMIAQYALAGFHSGAVIGTDHAAENITGFFTKFGDGGADILPLYRLNKRQGKQLLQKLGAEPALYEKIPTADLEEDKPGLADEVALGVTYAEIDDYLEGKTISPEAQATIENWWHKGQHKRHLPITVFDDFWE</sequence>
<accession>B5E5S7</accession>
<organism>
    <name type="scientific">Streptococcus pneumoniae serotype 19F (strain G54)</name>
    <dbReference type="NCBI Taxonomy" id="512566"/>
    <lineage>
        <taxon>Bacteria</taxon>
        <taxon>Bacillati</taxon>
        <taxon>Bacillota</taxon>
        <taxon>Bacilli</taxon>
        <taxon>Lactobacillales</taxon>
        <taxon>Streptococcaceae</taxon>
        <taxon>Streptococcus</taxon>
    </lineage>
</organism>
<gene>
    <name evidence="1" type="primary">nadE</name>
    <name type="ordered locus">SPG_1360</name>
</gene>
<proteinExistence type="inferred from homology"/>
<protein>
    <recommendedName>
        <fullName evidence="1">NH(3)-dependent NAD(+) synthetase</fullName>
        <ecNumber evidence="1">6.3.1.5</ecNumber>
    </recommendedName>
</protein>
<reference key="1">
    <citation type="journal article" date="2001" name="Microb. Drug Resist.">
        <title>Annotated draft genomic sequence from a Streptococcus pneumoniae type 19F clinical isolate.</title>
        <authorList>
            <person name="Dopazo J."/>
            <person name="Mendoza A."/>
            <person name="Herrero J."/>
            <person name="Caldara F."/>
            <person name="Humbert Y."/>
            <person name="Friedli L."/>
            <person name="Guerrier M."/>
            <person name="Grand-Schenk E."/>
            <person name="Gandin C."/>
            <person name="de Francesco M."/>
            <person name="Polissi A."/>
            <person name="Buell G."/>
            <person name="Feger G."/>
            <person name="Garcia E."/>
            <person name="Peitsch M."/>
            <person name="Garcia-Bustos J.F."/>
        </authorList>
    </citation>
    <scope>NUCLEOTIDE SEQUENCE [LARGE SCALE GENOMIC DNA]</scope>
    <source>
        <strain>G54</strain>
    </source>
</reference>
<reference key="2">
    <citation type="submission" date="2008-03" db="EMBL/GenBank/DDBJ databases">
        <title>Pneumococcal beta glucoside metabolism investigated by whole genome comparison.</title>
        <authorList>
            <person name="Mulas L."/>
            <person name="Trappetti C."/>
            <person name="Hakenbeck R."/>
            <person name="Iannelli F."/>
            <person name="Pozzi G."/>
            <person name="Davidsen T.M."/>
            <person name="Tettelin H."/>
            <person name="Oggioni M."/>
        </authorList>
    </citation>
    <scope>NUCLEOTIDE SEQUENCE [LARGE SCALE GENOMIC DNA]</scope>
    <source>
        <strain>G54</strain>
    </source>
</reference>